<sequence>MAKHLFTSESVSEGHPDKIADQISDAVLDAILEQDPKARVACETYVKTGMVLVGGEITTSAWVDIEEITRNTVREIGYVHSDMGFDANSCAVLSAIGKQSPDINQGVDRADPLEQGAGDQGLMFGYATNETDVLMPAPITYAHRLVQRQAEVRKNGTLPWLRPDAKSQVTFQYDDGKIVGIDAVVLSTQHSEEIDQKSLQEAVMEEIIKPILPAEWLTSATKFFINPTGRFVIGGPMGDCGLTGRKIIVDTYGGMARHGGGAFSGKDPSKVDRSAAYAARYVAKNIVAAGLADRCEIQVSYAIGVAEPTSIMVETFGTEKVPSEQLTLLVREFFDLRPYGLIQMLDLLHPIYKETAAYGHFGREHFPWEKTDKAQLLRDAAGLK</sequence>
<accession>Q0T0V0</accession>
<comment type="function">
    <text evidence="1">Catalyzes the formation of S-adenosylmethionine (AdoMet) from methionine and ATP. The overall synthetic reaction is composed of two sequential steps, AdoMet formation and the subsequent tripolyphosphate hydrolysis which occurs prior to release of AdoMet from the enzyme.</text>
</comment>
<comment type="catalytic activity">
    <reaction evidence="1">
        <text>L-methionine + ATP + H2O = S-adenosyl-L-methionine + phosphate + diphosphate</text>
        <dbReference type="Rhea" id="RHEA:21080"/>
        <dbReference type="ChEBI" id="CHEBI:15377"/>
        <dbReference type="ChEBI" id="CHEBI:30616"/>
        <dbReference type="ChEBI" id="CHEBI:33019"/>
        <dbReference type="ChEBI" id="CHEBI:43474"/>
        <dbReference type="ChEBI" id="CHEBI:57844"/>
        <dbReference type="ChEBI" id="CHEBI:59789"/>
        <dbReference type="EC" id="2.5.1.6"/>
    </reaction>
</comment>
<comment type="cofactor">
    <cofactor evidence="1">
        <name>Mg(2+)</name>
        <dbReference type="ChEBI" id="CHEBI:18420"/>
    </cofactor>
    <text evidence="1">Binds 2 divalent ions per subunit.</text>
</comment>
<comment type="cofactor">
    <cofactor evidence="1">
        <name>K(+)</name>
        <dbReference type="ChEBI" id="CHEBI:29103"/>
    </cofactor>
    <text evidence="1">Binds 1 potassium ion per subunit.</text>
</comment>
<comment type="pathway">
    <text evidence="1">Amino-acid biosynthesis; S-adenosyl-L-methionine biosynthesis; S-adenosyl-L-methionine from L-methionine: step 1/1.</text>
</comment>
<comment type="subunit">
    <text evidence="1">Homotetramer; dimer of dimers.</text>
</comment>
<comment type="subcellular location">
    <subcellularLocation>
        <location evidence="1">Cytoplasm</location>
    </subcellularLocation>
</comment>
<comment type="similarity">
    <text evidence="1">Belongs to the AdoMet synthase family.</text>
</comment>
<keyword id="KW-0067">ATP-binding</keyword>
<keyword id="KW-0963">Cytoplasm</keyword>
<keyword id="KW-0460">Magnesium</keyword>
<keyword id="KW-0479">Metal-binding</keyword>
<keyword id="KW-0547">Nucleotide-binding</keyword>
<keyword id="KW-0554">One-carbon metabolism</keyword>
<keyword id="KW-0630">Potassium</keyword>
<keyword id="KW-0808">Transferase</keyword>
<feature type="chain" id="PRO_0000302982" description="S-adenosylmethionine synthase">
    <location>
        <begin position="1"/>
        <end position="384"/>
    </location>
</feature>
<feature type="region of interest" description="Flexible loop" evidence="1">
    <location>
        <begin position="99"/>
        <end position="109"/>
    </location>
</feature>
<feature type="binding site" description="in other chain" evidence="1">
    <location>
        <position position="15"/>
    </location>
    <ligand>
        <name>ATP</name>
        <dbReference type="ChEBI" id="CHEBI:30616"/>
        <note>ligand shared between two neighboring subunits</note>
    </ligand>
</feature>
<feature type="binding site" evidence="1">
    <location>
        <position position="17"/>
    </location>
    <ligand>
        <name>Mg(2+)</name>
        <dbReference type="ChEBI" id="CHEBI:18420"/>
    </ligand>
</feature>
<feature type="binding site" evidence="1">
    <location>
        <position position="43"/>
    </location>
    <ligand>
        <name>K(+)</name>
        <dbReference type="ChEBI" id="CHEBI:29103"/>
    </ligand>
</feature>
<feature type="binding site" description="in other chain" evidence="1">
    <location>
        <position position="56"/>
    </location>
    <ligand>
        <name>L-methionine</name>
        <dbReference type="ChEBI" id="CHEBI:57844"/>
        <note>ligand shared between two neighboring subunits</note>
    </ligand>
</feature>
<feature type="binding site" description="in other chain" evidence="1">
    <location>
        <position position="99"/>
    </location>
    <ligand>
        <name>L-methionine</name>
        <dbReference type="ChEBI" id="CHEBI:57844"/>
        <note>ligand shared between two neighboring subunits</note>
    </ligand>
</feature>
<feature type="binding site" description="in other chain" evidence="1">
    <location>
        <begin position="164"/>
        <end position="166"/>
    </location>
    <ligand>
        <name>ATP</name>
        <dbReference type="ChEBI" id="CHEBI:30616"/>
        <note>ligand shared between two neighboring subunits</note>
    </ligand>
</feature>
<feature type="binding site" description="in other chain" evidence="1">
    <location>
        <begin position="230"/>
        <end position="231"/>
    </location>
    <ligand>
        <name>ATP</name>
        <dbReference type="ChEBI" id="CHEBI:30616"/>
        <note>ligand shared between two neighboring subunits</note>
    </ligand>
</feature>
<feature type="binding site" evidence="1">
    <location>
        <position position="239"/>
    </location>
    <ligand>
        <name>ATP</name>
        <dbReference type="ChEBI" id="CHEBI:30616"/>
        <note>ligand shared between two neighboring subunits</note>
    </ligand>
</feature>
<feature type="binding site" evidence="1">
    <location>
        <position position="239"/>
    </location>
    <ligand>
        <name>L-methionine</name>
        <dbReference type="ChEBI" id="CHEBI:57844"/>
        <note>ligand shared between two neighboring subunits</note>
    </ligand>
</feature>
<feature type="binding site" description="in other chain" evidence="1">
    <location>
        <begin position="245"/>
        <end position="246"/>
    </location>
    <ligand>
        <name>ATP</name>
        <dbReference type="ChEBI" id="CHEBI:30616"/>
        <note>ligand shared between two neighboring subunits</note>
    </ligand>
</feature>
<feature type="binding site" evidence="1">
    <location>
        <position position="262"/>
    </location>
    <ligand>
        <name>ATP</name>
        <dbReference type="ChEBI" id="CHEBI:30616"/>
        <note>ligand shared between two neighboring subunits</note>
    </ligand>
</feature>
<feature type="binding site" evidence="1">
    <location>
        <position position="266"/>
    </location>
    <ligand>
        <name>ATP</name>
        <dbReference type="ChEBI" id="CHEBI:30616"/>
        <note>ligand shared between two neighboring subunits</note>
    </ligand>
</feature>
<feature type="binding site" description="in other chain" evidence="1">
    <location>
        <position position="270"/>
    </location>
    <ligand>
        <name>L-methionine</name>
        <dbReference type="ChEBI" id="CHEBI:57844"/>
        <note>ligand shared between two neighboring subunits</note>
    </ligand>
</feature>
<proteinExistence type="inferred from homology"/>
<organism>
    <name type="scientific">Shigella flexneri serotype 5b (strain 8401)</name>
    <dbReference type="NCBI Taxonomy" id="373384"/>
    <lineage>
        <taxon>Bacteria</taxon>
        <taxon>Pseudomonadati</taxon>
        <taxon>Pseudomonadota</taxon>
        <taxon>Gammaproteobacteria</taxon>
        <taxon>Enterobacterales</taxon>
        <taxon>Enterobacteriaceae</taxon>
        <taxon>Shigella</taxon>
    </lineage>
</organism>
<evidence type="ECO:0000255" key="1">
    <source>
        <dbReference type="HAMAP-Rule" id="MF_00086"/>
    </source>
</evidence>
<name>METK_SHIF8</name>
<protein>
    <recommendedName>
        <fullName evidence="1">S-adenosylmethionine synthase</fullName>
        <shortName evidence="1">AdoMet synthase</shortName>
        <ecNumber evidence="1">2.5.1.6</ecNumber>
    </recommendedName>
    <alternativeName>
        <fullName evidence="1">MAT</fullName>
    </alternativeName>
    <alternativeName>
        <fullName evidence="1">Methionine adenosyltransferase</fullName>
    </alternativeName>
</protein>
<reference key="1">
    <citation type="journal article" date="2006" name="BMC Genomics">
        <title>Complete genome sequence of Shigella flexneri 5b and comparison with Shigella flexneri 2a.</title>
        <authorList>
            <person name="Nie H."/>
            <person name="Yang F."/>
            <person name="Zhang X."/>
            <person name="Yang J."/>
            <person name="Chen L."/>
            <person name="Wang J."/>
            <person name="Xiong Z."/>
            <person name="Peng J."/>
            <person name="Sun L."/>
            <person name="Dong J."/>
            <person name="Xue Y."/>
            <person name="Xu X."/>
            <person name="Chen S."/>
            <person name="Yao Z."/>
            <person name="Shen Y."/>
            <person name="Jin Q."/>
        </authorList>
    </citation>
    <scope>NUCLEOTIDE SEQUENCE [LARGE SCALE GENOMIC DNA]</scope>
    <source>
        <strain>8401</strain>
    </source>
</reference>
<gene>
    <name evidence="1" type="primary">metK</name>
    <name type="ordered locus">SFV_2996</name>
</gene>
<dbReference type="EC" id="2.5.1.6" evidence="1"/>
<dbReference type="EMBL" id="CP000266">
    <property type="protein sequence ID" value="ABF05065.1"/>
    <property type="molecule type" value="Genomic_DNA"/>
</dbReference>
<dbReference type="RefSeq" id="WP_001062128.1">
    <property type="nucleotide sequence ID" value="NC_008258.1"/>
</dbReference>
<dbReference type="SMR" id="Q0T0V0"/>
<dbReference type="GeneID" id="93779055"/>
<dbReference type="KEGG" id="sfv:SFV_2996"/>
<dbReference type="HOGENOM" id="CLU_041802_1_1_6"/>
<dbReference type="UniPathway" id="UPA00315">
    <property type="reaction ID" value="UER00080"/>
</dbReference>
<dbReference type="Proteomes" id="UP000000659">
    <property type="component" value="Chromosome"/>
</dbReference>
<dbReference type="GO" id="GO:0005737">
    <property type="term" value="C:cytoplasm"/>
    <property type="evidence" value="ECO:0007669"/>
    <property type="project" value="UniProtKB-SubCell"/>
</dbReference>
<dbReference type="GO" id="GO:0005524">
    <property type="term" value="F:ATP binding"/>
    <property type="evidence" value="ECO:0007669"/>
    <property type="project" value="UniProtKB-UniRule"/>
</dbReference>
<dbReference type="GO" id="GO:0000287">
    <property type="term" value="F:magnesium ion binding"/>
    <property type="evidence" value="ECO:0007669"/>
    <property type="project" value="UniProtKB-UniRule"/>
</dbReference>
<dbReference type="GO" id="GO:0004478">
    <property type="term" value="F:methionine adenosyltransferase activity"/>
    <property type="evidence" value="ECO:0007669"/>
    <property type="project" value="UniProtKB-UniRule"/>
</dbReference>
<dbReference type="GO" id="GO:0006730">
    <property type="term" value="P:one-carbon metabolic process"/>
    <property type="evidence" value="ECO:0007669"/>
    <property type="project" value="UniProtKB-KW"/>
</dbReference>
<dbReference type="GO" id="GO:0006556">
    <property type="term" value="P:S-adenosylmethionine biosynthetic process"/>
    <property type="evidence" value="ECO:0007669"/>
    <property type="project" value="UniProtKB-UniRule"/>
</dbReference>
<dbReference type="CDD" id="cd18079">
    <property type="entry name" value="S-AdoMet_synt"/>
    <property type="match status" value="1"/>
</dbReference>
<dbReference type="FunFam" id="3.30.300.10:FF:000001">
    <property type="entry name" value="S-adenosylmethionine synthase"/>
    <property type="match status" value="1"/>
</dbReference>
<dbReference type="FunFam" id="3.30.300.10:FF:000003">
    <property type="entry name" value="S-adenosylmethionine synthase"/>
    <property type="match status" value="1"/>
</dbReference>
<dbReference type="Gene3D" id="3.30.300.10">
    <property type="match status" value="3"/>
</dbReference>
<dbReference type="HAMAP" id="MF_00086">
    <property type="entry name" value="S_AdoMet_synth1"/>
    <property type="match status" value="1"/>
</dbReference>
<dbReference type="InterPro" id="IPR022631">
    <property type="entry name" value="ADOMET_SYNTHASE_CS"/>
</dbReference>
<dbReference type="InterPro" id="IPR022630">
    <property type="entry name" value="S-AdoMet_synt_C"/>
</dbReference>
<dbReference type="InterPro" id="IPR022629">
    <property type="entry name" value="S-AdoMet_synt_central"/>
</dbReference>
<dbReference type="InterPro" id="IPR022628">
    <property type="entry name" value="S-AdoMet_synt_N"/>
</dbReference>
<dbReference type="InterPro" id="IPR002133">
    <property type="entry name" value="S-AdoMet_synthetase"/>
</dbReference>
<dbReference type="InterPro" id="IPR022636">
    <property type="entry name" value="S-AdoMet_synthetase_sfam"/>
</dbReference>
<dbReference type="NCBIfam" id="TIGR01034">
    <property type="entry name" value="metK"/>
    <property type="match status" value="1"/>
</dbReference>
<dbReference type="PANTHER" id="PTHR11964">
    <property type="entry name" value="S-ADENOSYLMETHIONINE SYNTHETASE"/>
    <property type="match status" value="1"/>
</dbReference>
<dbReference type="Pfam" id="PF02773">
    <property type="entry name" value="S-AdoMet_synt_C"/>
    <property type="match status" value="1"/>
</dbReference>
<dbReference type="Pfam" id="PF02772">
    <property type="entry name" value="S-AdoMet_synt_M"/>
    <property type="match status" value="1"/>
</dbReference>
<dbReference type="Pfam" id="PF00438">
    <property type="entry name" value="S-AdoMet_synt_N"/>
    <property type="match status" value="1"/>
</dbReference>
<dbReference type="PIRSF" id="PIRSF000497">
    <property type="entry name" value="MAT"/>
    <property type="match status" value="1"/>
</dbReference>
<dbReference type="SUPFAM" id="SSF55973">
    <property type="entry name" value="S-adenosylmethionine synthetase"/>
    <property type="match status" value="3"/>
</dbReference>
<dbReference type="PROSITE" id="PS00376">
    <property type="entry name" value="ADOMET_SYNTHASE_1"/>
    <property type="match status" value="1"/>
</dbReference>
<dbReference type="PROSITE" id="PS00377">
    <property type="entry name" value="ADOMET_SYNTHASE_2"/>
    <property type="match status" value="1"/>
</dbReference>